<sequence>MEKCGFNSMLSNEELEHKCELSKSMDSLGLIGNTGAGGGPTLIFDVRDILSLIYDDTFKLKDRNGDSYSVYFDIDNKIFEIDDDSDSLSGLDIENQNQIFFDIYNDSDSLSELDSENKNFEIHNESDFMSKLESSFFSYLTYSCLKRRSSFSSYPTSLTSSNLNSGSKSYNPYYDPYMHDTRYSWNNDININSCIDSYIRCEIDSISSGSDNCSDSYIYSYICSEGVSYSDNGSSSIRTRTSTSSGSSYHIRGRSNNFEKNKKLKKLWVQCENCYALNYNKLFRSKMNVCEQCGYHLKMSSSDRIELSIDPGTWHPMDEDMVSTDPIEFHSEEEPYRDRIDSYQRQAGLTDAVQTGIGQLEGIPIAIGVMDFQFMGGSMGSVVGEKITRLIEYAIDRSLPVVIVCASGGARMQEGGLSLMQMAKISSASYNYQSNKKLFYVSILTSPTTGGVTASFGMLGDIIIAEPNAYVAFAGKRVIEETLNKKIPDGLQVAEYSFHKGLFDSIVPRNPLKGVPSELFQLHGFFSSTFHPLKSNKVKR</sequence>
<protein>
    <recommendedName>
        <fullName evidence="2">Acetyl-coenzyme A carboxylase carboxyl transferase subunit beta, chloroplastic</fullName>
        <shortName evidence="2">ACCase subunit beta</shortName>
        <shortName evidence="2">Acetyl-CoA carboxylase carboxyltransferase subunit beta</shortName>
        <ecNumber evidence="2">2.1.3.15</ecNumber>
    </recommendedName>
</protein>
<comment type="function">
    <text evidence="2">Component of the acetyl coenzyme A carboxylase (ACC) complex. Biotin carboxylase (BC) catalyzes the carboxylation of biotin on its carrier protein (BCCP) and then the CO(2) group is transferred by the transcarboxylase to acetyl-CoA to form malonyl-CoA.</text>
</comment>
<comment type="catalytic activity">
    <reaction evidence="2">
        <text>N(6)-carboxybiotinyl-L-lysyl-[protein] + acetyl-CoA = N(6)-biotinyl-L-lysyl-[protein] + malonyl-CoA</text>
        <dbReference type="Rhea" id="RHEA:54728"/>
        <dbReference type="Rhea" id="RHEA-COMP:10505"/>
        <dbReference type="Rhea" id="RHEA-COMP:10506"/>
        <dbReference type="ChEBI" id="CHEBI:57288"/>
        <dbReference type="ChEBI" id="CHEBI:57384"/>
        <dbReference type="ChEBI" id="CHEBI:83144"/>
        <dbReference type="ChEBI" id="CHEBI:83145"/>
        <dbReference type="EC" id="2.1.3.15"/>
    </reaction>
</comment>
<comment type="cofactor">
    <cofactor evidence="2">
        <name>Zn(2+)</name>
        <dbReference type="ChEBI" id="CHEBI:29105"/>
    </cofactor>
    <text evidence="2">Binds 1 zinc ion per subunit.</text>
</comment>
<comment type="pathway">
    <text evidence="2">Lipid metabolism; malonyl-CoA biosynthesis; malonyl-CoA from acetyl-CoA: step 1/1.</text>
</comment>
<comment type="subunit">
    <text evidence="1">Acetyl-CoA carboxylase is a heterohexamer composed of biotin carboxyl carrier protein, biotin carboxylase and 2 subunits each of ACCase subunit alpha and ACCase plastid-coded subunit beta (accD).</text>
</comment>
<comment type="subcellular location">
    <subcellularLocation>
        <location evidence="2">Plastid</location>
        <location evidence="2">Chloroplast stroma</location>
    </subcellularLocation>
</comment>
<comment type="similarity">
    <text evidence="2">Belongs to the AccD/PCCB family.</text>
</comment>
<geneLocation type="chloroplast"/>
<gene>
    <name evidence="2" type="primary">accD</name>
</gene>
<reference key="1">
    <citation type="journal article" date="2003" name="Mol. Biol. Evol.">
        <title>Analysis of the Amborella trichopoda chloroplast genome sequence suggests that Amborella is not a basal angiosperm.</title>
        <authorList>
            <person name="Goremykin V.V."/>
            <person name="Hirsch-Ernst K.I."/>
            <person name="Wolfl S."/>
            <person name="Hellwig F.H."/>
        </authorList>
    </citation>
    <scope>NUCLEOTIDE SEQUENCE [LARGE SCALE GENOMIC DNA]</scope>
</reference>
<name>ACCD_AMBTC</name>
<dbReference type="EC" id="2.1.3.15" evidence="2"/>
<dbReference type="EMBL" id="AJ506156">
    <property type="protein sequence ID" value="CAD45116.1"/>
    <property type="molecule type" value="Genomic_DNA"/>
</dbReference>
<dbReference type="RefSeq" id="NP_904108.1">
    <property type="nucleotide sequence ID" value="NC_005086.1"/>
</dbReference>
<dbReference type="SMR" id="Q70XZ4"/>
<dbReference type="STRING" id="13333.Q70XZ4"/>
<dbReference type="GeneID" id="2546605"/>
<dbReference type="KEGG" id="atr:2546605"/>
<dbReference type="eggNOG" id="ENOG502QTI9">
    <property type="taxonomic scope" value="Eukaryota"/>
</dbReference>
<dbReference type="OrthoDB" id="10053020at2759"/>
<dbReference type="UniPathway" id="UPA00655">
    <property type="reaction ID" value="UER00711"/>
</dbReference>
<dbReference type="Proteomes" id="UP000017836">
    <property type="component" value="Chloroplast"/>
</dbReference>
<dbReference type="GO" id="GO:0009317">
    <property type="term" value="C:acetyl-CoA carboxylase complex"/>
    <property type="evidence" value="ECO:0007669"/>
    <property type="project" value="InterPro"/>
</dbReference>
<dbReference type="GO" id="GO:0009570">
    <property type="term" value="C:chloroplast stroma"/>
    <property type="evidence" value="ECO:0007669"/>
    <property type="project" value="UniProtKB-SubCell"/>
</dbReference>
<dbReference type="GO" id="GO:0003989">
    <property type="term" value="F:acetyl-CoA carboxylase activity"/>
    <property type="evidence" value="ECO:0007669"/>
    <property type="project" value="InterPro"/>
</dbReference>
<dbReference type="GO" id="GO:0005524">
    <property type="term" value="F:ATP binding"/>
    <property type="evidence" value="ECO:0007669"/>
    <property type="project" value="UniProtKB-KW"/>
</dbReference>
<dbReference type="GO" id="GO:0016743">
    <property type="term" value="F:carboxyl- or carbamoyltransferase activity"/>
    <property type="evidence" value="ECO:0007669"/>
    <property type="project" value="UniProtKB-UniRule"/>
</dbReference>
<dbReference type="GO" id="GO:0008270">
    <property type="term" value="F:zinc ion binding"/>
    <property type="evidence" value="ECO:0007669"/>
    <property type="project" value="UniProtKB-UniRule"/>
</dbReference>
<dbReference type="GO" id="GO:0006633">
    <property type="term" value="P:fatty acid biosynthetic process"/>
    <property type="evidence" value="ECO:0000318"/>
    <property type="project" value="GO_Central"/>
</dbReference>
<dbReference type="GO" id="GO:2001295">
    <property type="term" value="P:malonyl-CoA biosynthetic process"/>
    <property type="evidence" value="ECO:0007669"/>
    <property type="project" value="UniProtKB-UniRule"/>
</dbReference>
<dbReference type="Gene3D" id="3.90.226.10">
    <property type="entry name" value="2-enoyl-CoA Hydratase, Chain A, domain 1"/>
    <property type="match status" value="1"/>
</dbReference>
<dbReference type="HAMAP" id="MF_01395">
    <property type="entry name" value="AcetylCoA_CT_beta"/>
    <property type="match status" value="1"/>
</dbReference>
<dbReference type="InterPro" id="IPR034733">
    <property type="entry name" value="AcCoA_carboxyl_beta"/>
</dbReference>
<dbReference type="InterPro" id="IPR000438">
    <property type="entry name" value="Acetyl_CoA_COase_Trfase_b_su"/>
</dbReference>
<dbReference type="InterPro" id="IPR029045">
    <property type="entry name" value="ClpP/crotonase-like_dom_sf"/>
</dbReference>
<dbReference type="InterPro" id="IPR011762">
    <property type="entry name" value="COA_CT_N"/>
</dbReference>
<dbReference type="NCBIfam" id="TIGR00515">
    <property type="entry name" value="accD"/>
    <property type="match status" value="1"/>
</dbReference>
<dbReference type="PANTHER" id="PTHR42995">
    <property type="entry name" value="ACETYL-COENZYME A CARBOXYLASE CARBOXYL TRANSFERASE SUBUNIT BETA, CHLOROPLASTIC"/>
    <property type="match status" value="1"/>
</dbReference>
<dbReference type="PANTHER" id="PTHR42995:SF5">
    <property type="entry name" value="ACETYL-COENZYME A CARBOXYLASE CARBOXYL TRANSFERASE SUBUNIT BETA, CHLOROPLASTIC"/>
    <property type="match status" value="1"/>
</dbReference>
<dbReference type="Pfam" id="PF01039">
    <property type="entry name" value="Carboxyl_trans"/>
    <property type="match status" value="1"/>
</dbReference>
<dbReference type="PRINTS" id="PR01070">
    <property type="entry name" value="ACCCTRFRASEB"/>
</dbReference>
<dbReference type="SUPFAM" id="SSF52096">
    <property type="entry name" value="ClpP/crotonase"/>
    <property type="match status" value="1"/>
</dbReference>
<dbReference type="PROSITE" id="PS50980">
    <property type="entry name" value="COA_CT_NTER"/>
    <property type="match status" value="1"/>
</dbReference>
<organism>
    <name type="scientific">Amborella trichopoda</name>
    <dbReference type="NCBI Taxonomy" id="13333"/>
    <lineage>
        <taxon>Eukaryota</taxon>
        <taxon>Viridiplantae</taxon>
        <taxon>Streptophyta</taxon>
        <taxon>Embryophyta</taxon>
        <taxon>Tracheophyta</taxon>
        <taxon>Spermatophyta</taxon>
        <taxon>Magnoliopsida</taxon>
        <taxon>Amborellales</taxon>
        <taxon>Amborellaceae</taxon>
        <taxon>Amborella</taxon>
    </lineage>
</organism>
<feature type="chain" id="PRO_0000359120" description="Acetyl-coenzyme A carboxylase carboxyl transferase subunit beta, chloroplastic">
    <location>
        <begin position="1"/>
        <end position="540"/>
    </location>
</feature>
<feature type="domain" description="CoA carboxyltransferase N-terminal" evidence="3">
    <location>
        <begin position="267"/>
        <end position="538"/>
    </location>
</feature>
<feature type="zinc finger region" description="C4-type" evidence="2">
    <location>
        <begin position="271"/>
        <end position="293"/>
    </location>
</feature>
<feature type="region of interest" description="Disordered" evidence="4">
    <location>
        <begin position="229"/>
        <end position="249"/>
    </location>
</feature>
<feature type="compositionally biased region" description="Low complexity" evidence="4">
    <location>
        <begin position="233"/>
        <end position="248"/>
    </location>
</feature>
<feature type="binding site" evidence="2">
    <location>
        <position position="271"/>
    </location>
    <ligand>
        <name>Zn(2+)</name>
        <dbReference type="ChEBI" id="CHEBI:29105"/>
    </ligand>
</feature>
<feature type="binding site" evidence="2">
    <location>
        <position position="274"/>
    </location>
    <ligand>
        <name>Zn(2+)</name>
        <dbReference type="ChEBI" id="CHEBI:29105"/>
    </ligand>
</feature>
<feature type="binding site" evidence="2">
    <location>
        <position position="290"/>
    </location>
    <ligand>
        <name>Zn(2+)</name>
        <dbReference type="ChEBI" id="CHEBI:29105"/>
    </ligand>
</feature>
<feature type="binding site" evidence="2">
    <location>
        <position position="293"/>
    </location>
    <ligand>
        <name>Zn(2+)</name>
        <dbReference type="ChEBI" id="CHEBI:29105"/>
    </ligand>
</feature>
<keyword id="KW-0067">ATP-binding</keyword>
<keyword id="KW-0150">Chloroplast</keyword>
<keyword id="KW-0275">Fatty acid biosynthesis</keyword>
<keyword id="KW-0276">Fatty acid metabolism</keyword>
<keyword id="KW-0444">Lipid biosynthesis</keyword>
<keyword id="KW-0443">Lipid metabolism</keyword>
<keyword id="KW-0479">Metal-binding</keyword>
<keyword id="KW-0547">Nucleotide-binding</keyword>
<keyword id="KW-0934">Plastid</keyword>
<keyword id="KW-1185">Reference proteome</keyword>
<keyword id="KW-0808">Transferase</keyword>
<keyword id="KW-0862">Zinc</keyword>
<keyword id="KW-0863">Zinc-finger</keyword>
<accession>Q70XZ4</accession>
<evidence type="ECO:0000250" key="1"/>
<evidence type="ECO:0000255" key="2">
    <source>
        <dbReference type="HAMAP-Rule" id="MF_01395"/>
    </source>
</evidence>
<evidence type="ECO:0000255" key="3">
    <source>
        <dbReference type="PROSITE-ProRule" id="PRU01136"/>
    </source>
</evidence>
<evidence type="ECO:0000256" key="4">
    <source>
        <dbReference type="SAM" id="MobiDB-lite"/>
    </source>
</evidence>
<proteinExistence type="inferred from homology"/>